<name>CITA_MONPU</name>
<sequence>MKGQTGLRSLALLYISPLYILERLPLKLSAPDTLVVRGSFIVPTEPLYPSITMVQTNLEVVDDTLHLPRILCLHGGGSNAAIFQAQCRRLIAQLRSEFRFVFAQAPFLSDAEPNVMSVYSQWGPFRRWLRWCPDHPEIRPEDAIRAIDDCLEDVKRQDDAKGATGAWVGLLGFSQGAKMCASLLYRQQIRQELRGRSFAGSDYRFGVLLAGRAPLVSLDPDLDLNSSLPDVSQITDAKYHGPSQDVLRIPTVHVHGMRDPHVDLHRQLFEEFCAPESRRLVEWDGDHRVPLKYNDVSLVAYQIRELATQTGAP</sequence>
<proteinExistence type="evidence at protein level"/>
<reference key="1">
    <citation type="journal article" date="2007" name="Appl. Environ. Microbiol.">
        <title>Identification and in vivo functional analysis by gene disruption of ctnA, an activator gene involved in citrinin biosynthesis in Monascus purpureus.</title>
        <authorList>
            <person name="Shimizu T."/>
            <person name="Kinoshita H."/>
            <person name="Nihira T."/>
        </authorList>
    </citation>
    <scope>NUCLEOTIDE SEQUENCE [GENOMIC DNA]</scope>
    <scope>FUNCTION</scope>
</reference>
<reference key="2">
    <citation type="journal article" date="2008" name="J. Agric. Food Chem.">
        <title>Exploring the distribution of citrinin biosynthesis related genes among Monascus species.</title>
        <authorList>
            <person name="Chen Y.P."/>
            <person name="Tseng C.P."/>
            <person name="Chien I.L."/>
            <person name="Wang W.Y."/>
            <person name="Liaw L.L."/>
            <person name="Yuan G.F."/>
        </authorList>
    </citation>
    <scope>FUNCTION</scope>
</reference>
<reference key="3">
    <citation type="journal article" date="2008" name="J. Biosci. Bioeng.">
        <title>Construction of a citrinin gene cluster expression system in heterologous Aspergillus oryzae.</title>
        <authorList>
            <person name="Sakai K."/>
            <person name="Kinoshita H."/>
            <person name="Shimizu T."/>
            <person name="Nihira T."/>
        </authorList>
    </citation>
    <scope>FUNCTION</scope>
</reference>
<reference key="4">
    <citation type="journal article" date="2017" name="Cell Chem. Biol.">
        <title>Functional and structural analysis of programmed C-methylation in the biosynthesis of the fungal polyketide citrinin.</title>
        <authorList>
            <person name="Storm P.A."/>
            <person name="Herbst D.A."/>
            <person name="Maier T."/>
            <person name="Townsend C.A."/>
        </authorList>
    </citation>
    <scope>FUNCTION</scope>
</reference>
<reference key="5">
    <citation type="journal article" date="2017" name="J. Biotechnol.">
        <title>Methylotrophic yeast Pichia pastoris as a chassis organism for polyketide synthesis via the full citrinin biosynthetic pathway.</title>
        <authorList>
            <person name="Xue Y."/>
            <person name="Kong C."/>
            <person name="Shen W."/>
            <person name="Bai C."/>
            <person name="Ren Y."/>
            <person name="Zhou X."/>
            <person name="Zhang Y."/>
            <person name="Cai M."/>
        </authorList>
    </citation>
    <scope>FUNCTION</scope>
    <scope>CATALYTIC ACTIVITY</scope>
    <scope>PATHWAY</scope>
</reference>
<accession>Q1ERH9</accession>
<organism>
    <name type="scientific">Monascus purpureus</name>
    <name type="common">Red mold</name>
    <name type="synonym">Monascus anka</name>
    <dbReference type="NCBI Taxonomy" id="5098"/>
    <lineage>
        <taxon>Eukaryota</taxon>
        <taxon>Fungi</taxon>
        <taxon>Dikarya</taxon>
        <taxon>Ascomycota</taxon>
        <taxon>Pezizomycotina</taxon>
        <taxon>Eurotiomycetes</taxon>
        <taxon>Eurotiomycetidae</taxon>
        <taxon>Eurotiales</taxon>
        <taxon>Aspergillaceae</taxon>
        <taxon>Monascus</taxon>
    </lineage>
</organism>
<dbReference type="EC" id="3.1.2.-" evidence="11"/>
<dbReference type="EMBL" id="AB243687">
    <property type="protein sequence ID" value="BAE95339.1"/>
    <property type="molecule type" value="Genomic_DNA"/>
</dbReference>
<dbReference type="SMR" id="Q1ERH9"/>
<dbReference type="ESTHER" id="monpu-cita">
    <property type="family name" value="FSH1"/>
</dbReference>
<dbReference type="OrthoDB" id="414698at2759"/>
<dbReference type="GO" id="GO:0005737">
    <property type="term" value="C:cytoplasm"/>
    <property type="evidence" value="ECO:0007669"/>
    <property type="project" value="TreeGrafter"/>
</dbReference>
<dbReference type="GO" id="GO:0005634">
    <property type="term" value="C:nucleus"/>
    <property type="evidence" value="ECO:0007669"/>
    <property type="project" value="TreeGrafter"/>
</dbReference>
<dbReference type="GO" id="GO:0016787">
    <property type="term" value="F:hydrolase activity"/>
    <property type="evidence" value="ECO:0007669"/>
    <property type="project" value="UniProtKB-KW"/>
</dbReference>
<dbReference type="GO" id="GO:0044550">
    <property type="term" value="P:secondary metabolite biosynthetic process"/>
    <property type="evidence" value="ECO:0007669"/>
    <property type="project" value="TreeGrafter"/>
</dbReference>
<dbReference type="Gene3D" id="3.40.50.1820">
    <property type="entry name" value="alpha/beta hydrolase"/>
    <property type="match status" value="1"/>
</dbReference>
<dbReference type="InterPro" id="IPR029058">
    <property type="entry name" value="AB_hydrolase_fold"/>
</dbReference>
<dbReference type="InterPro" id="IPR005645">
    <property type="entry name" value="FSH-like_dom"/>
</dbReference>
<dbReference type="InterPro" id="IPR050593">
    <property type="entry name" value="LovG"/>
</dbReference>
<dbReference type="PANTHER" id="PTHR48070:SF3">
    <property type="entry name" value="ESTERASE DBAE-RELATED"/>
    <property type="match status" value="1"/>
</dbReference>
<dbReference type="PANTHER" id="PTHR48070">
    <property type="entry name" value="ESTERASE OVCA2"/>
    <property type="match status" value="1"/>
</dbReference>
<dbReference type="Pfam" id="PF03959">
    <property type="entry name" value="FSH1"/>
    <property type="match status" value="1"/>
</dbReference>
<dbReference type="SUPFAM" id="SSF53474">
    <property type="entry name" value="alpha/beta-Hydrolases"/>
    <property type="match status" value="1"/>
</dbReference>
<keyword id="KW-0378">Hydrolase</keyword>
<evidence type="ECO:0000250" key="1">
    <source>
        <dbReference type="UniProtKB" id="A0A161CKG1"/>
    </source>
</evidence>
<evidence type="ECO:0000250" key="2">
    <source>
        <dbReference type="UniProtKB" id="P38777"/>
    </source>
</evidence>
<evidence type="ECO:0000269" key="3">
    <source>
    </source>
</evidence>
<evidence type="ECO:0000269" key="4">
    <source>
    </source>
</evidence>
<evidence type="ECO:0000269" key="5">
    <source>
    </source>
</evidence>
<evidence type="ECO:0000269" key="6">
    <source>
    </source>
</evidence>
<evidence type="ECO:0000269" key="7">
    <source>
    </source>
</evidence>
<evidence type="ECO:0000303" key="8">
    <source>
    </source>
</evidence>
<evidence type="ECO:0000303" key="9">
    <source>
    </source>
</evidence>
<evidence type="ECO:0000305" key="10"/>
<evidence type="ECO:0000305" key="11">
    <source>
    </source>
</evidence>
<protein>
    <recommendedName>
        <fullName evidence="9">Esterase mpl1</fullName>
        <ecNumber evidence="11">3.1.2.-</ecNumber>
    </recommendedName>
    <alternativeName>
        <fullName evidence="8">Citrinin synthesis protein B</fullName>
    </alternativeName>
</protein>
<comment type="function">
    <text evidence="1 3 4 5 6 7">Esterase; part of the gene cluster that mediates the biosynthesis of the mycotoxin citrinin, a hepato-nephrotoxic compound to humans due to inhibition of respiration complex III (PubMed:17586673, PubMed:19012408, PubMed:19111642, PubMed:27913218, PubMed:28238725). The pathway begins with the synthesis of a keto-aldehyde intermediate by the citrinin PKS (pksCT) from successive condensations of 4 malonyl-CoA units, presumably with a simple acetyl-CoA starter unit (PubMed:28238725). Release of the keto-aldehyde intermediate is consistent with the presence of the C-terminal reductive release domain (PubMed:28238725). Mp11 collaborates with pksCT by catalyzing the hydrolysis of ACP-bound acyl intermediates to free the ACP from stalled intermediates (By similarity). Mpl2 then catalyzes the oxidation of the C-12 methyl of the ketone intermediate to an alcohol intermediate which is further oxidized by the oxidoreductase mpl7 to produce a bisaldehyde intermediate (PubMed:27913218). The fourth catalytic step is catalyzed by the mpl4 aldehyde dehydrogenase (PubMed:27913218). The final transformation is the reduction of C-3 by mpl6 to provide the chemically stable citrinin nucleus (PubMed:27913218).</text>
</comment>
<comment type="pathway">
    <text evidence="6">Mycotoxin biosynthesis.</text>
</comment>
<comment type="similarity">
    <text evidence="10">Belongs to the LovG family.</text>
</comment>
<feature type="chain" id="PRO_0000440314" description="Esterase mpl1">
    <location>
        <begin position="1"/>
        <end position="313"/>
    </location>
</feature>
<feature type="active site" description="Charge relay system" evidence="2">
    <location>
        <position position="174"/>
    </location>
</feature>
<feature type="active site" description="Charge relay system" evidence="2">
    <location>
        <position position="259"/>
    </location>
</feature>
<feature type="active site" description="Charge relay system" evidence="2">
    <location>
        <position position="287"/>
    </location>
</feature>
<gene>
    <name evidence="9" type="primary">mpl1</name>
    <name evidence="8" type="synonym">ctnB</name>
</gene>